<reference key="1">
    <citation type="submission" date="2008-03" db="EMBL/GenBank/DDBJ databases">
        <title>Complete sequence of Leptothrix cholodnii SP-6.</title>
        <authorList>
            <consortium name="US DOE Joint Genome Institute"/>
            <person name="Copeland A."/>
            <person name="Lucas S."/>
            <person name="Lapidus A."/>
            <person name="Glavina del Rio T."/>
            <person name="Dalin E."/>
            <person name="Tice H."/>
            <person name="Bruce D."/>
            <person name="Goodwin L."/>
            <person name="Pitluck S."/>
            <person name="Chertkov O."/>
            <person name="Brettin T."/>
            <person name="Detter J.C."/>
            <person name="Han C."/>
            <person name="Kuske C.R."/>
            <person name="Schmutz J."/>
            <person name="Larimer F."/>
            <person name="Land M."/>
            <person name="Hauser L."/>
            <person name="Kyrpides N."/>
            <person name="Lykidis A."/>
            <person name="Emerson D."/>
            <person name="Richardson P."/>
        </authorList>
    </citation>
    <scope>NUCLEOTIDE SEQUENCE [LARGE SCALE GENOMIC DNA]</scope>
    <source>
        <strain>ATCC 51168 / LMG 8142 / SP-6</strain>
    </source>
</reference>
<evidence type="ECO:0000255" key="1">
    <source>
        <dbReference type="HAMAP-Rule" id="MF_01302"/>
    </source>
</evidence>
<evidence type="ECO:0000305" key="2"/>
<gene>
    <name evidence="1" type="primary">rpsH</name>
    <name type="ordered locus">Lcho_3935</name>
</gene>
<dbReference type="EMBL" id="CP001013">
    <property type="protein sequence ID" value="ACB36189.1"/>
    <property type="molecule type" value="Genomic_DNA"/>
</dbReference>
<dbReference type="RefSeq" id="WP_012348934.1">
    <property type="nucleotide sequence ID" value="NC_010524.1"/>
</dbReference>
<dbReference type="SMR" id="B1Y8C3"/>
<dbReference type="STRING" id="395495.Lcho_3935"/>
<dbReference type="KEGG" id="lch:Lcho_3935"/>
<dbReference type="eggNOG" id="COG0096">
    <property type="taxonomic scope" value="Bacteria"/>
</dbReference>
<dbReference type="HOGENOM" id="CLU_098428_0_0_4"/>
<dbReference type="OrthoDB" id="9802617at2"/>
<dbReference type="Proteomes" id="UP000001693">
    <property type="component" value="Chromosome"/>
</dbReference>
<dbReference type="GO" id="GO:1990904">
    <property type="term" value="C:ribonucleoprotein complex"/>
    <property type="evidence" value="ECO:0007669"/>
    <property type="project" value="UniProtKB-KW"/>
</dbReference>
<dbReference type="GO" id="GO:0005840">
    <property type="term" value="C:ribosome"/>
    <property type="evidence" value="ECO:0007669"/>
    <property type="project" value="UniProtKB-KW"/>
</dbReference>
<dbReference type="GO" id="GO:0019843">
    <property type="term" value="F:rRNA binding"/>
    <property type="evidence" value="ECO:0007669"/>
    <property type="project" value="UniProtKB-UniRule"/>
</dbReference>
<dbReference type="GO" id="GO:0003735">
    <property type="term" value="F:structural constituent of ribosome"/>
    <property type="evidence" value="ECO:0007669"/>
    <property type="project" value="InterPro"/>
</dbReference>
<dbReference type="GO" id="GO:0006412">
    <property type="term" value="P:translation"/>
    <property type="evidence" value="ECO:0007669"/>
    <property type="project" value="UniProtKB-UniRule"/>
</dbReference>
<dbReference type="FunFam" id="3.30.1370.30:FF:000002">
    <property type="entry name" value="30S ribosomal protein S8"/>
    <property type="match status" value="1"/>
</dbReference>
<dbReference type="FunFam" id="3.30.1490.10:FF:000001">
    <property type="entry name" value="30S ribosomal protein S8"/>
    <property type="match status" value="1"/>
</dbReference>
<dbReference type="Gene3D" id="3.30.1370.30">
    <property type="match status" value="1"/>
</dbReference>
<dbReference type="Gene3D" id="3.30.1490.10">
    <property type="match status" value="1"/>
</dbReference>
<dbReference type="HAMAP" id="MF_01302_B">
    <property type="entry name" value="Ribosomal_uS8_B"/>
    <property type="match status" value="1"/>
</dbReference>
<dbReference type="InterPro" id="IPR000630">
    <property type="entry name" value="Ribosomal_uS8"/>
</dbReference>
<dbReference type="InterPro" id="IPR047863">
    <property type="entry name" value="Ribosomal_uS8_CS"/>
</dbReference>
<dbReference type="InterPro" id="IPR035987">
    <property type="entry name" value="Ribosomal_uS8_sf"/>
</dbReference>
<dbReference type="NCBIfam" id="NF001109">
    <property type="entry name" value="PRK00136.1"/>
    <property type="match status" value="1"/>
</dbReference>
<dbReference type="PANTHER" id="PTHR11758">
    <property type="entry name" value="40S RIBOSOMAL PROTEIN S15A"/>
    <property type="match status" value="1"/>
</dbReference>
<dbReference type="Pfam" id="PF00410">
    <property type="entry name" value="Ribosomal_S8"/>
    <property type="match status" value="1"/>
</dbReference>
<dbReference type="SUPFAM" id="SSF56047">
    <property type="entry name" value="Ribosomal protein S8"/>
    <property type="match status" value="1"/>
</dbReference>
<dbReference type="PROSITE" id="PS00053">
    <property type="entry name" value="RIBOSOMAL_S8"/>
    <property type="match status" value="1"/>
</dbReference>
<proteinExistence type="inferred from homology"/>
<keyword id="KW-1185">Reference proteome</keyword>
<keyword id="KW-0687">Ribonucleoprotein</keyword>
<keyword id="KW-0689">Ribosomal protein</keyword>
<keyword id="KW-0694">RNA-binding</keyword>
<keyword id="KW-0699">rRNA-binding</keyword>
<sequence length="131" mass="14229">MSMSDPIADMLTRIRNAQMVEKTSVAMPSSKLKSAIAQVLKDEGYIDGFAVKTTDGKSQLEISLKYYAGRPVIERIERVSRPGLRIYKGRHDIPTVMNGLGVAIVTTPQGVMTDRKARAAGIGGEVLCYVA</sequence>
<feature type="chain" id="PRO_1000140576" description="Small ribosomal subunit protein uS8">
    <location>
        <begin position="1"/>
        <end position="131"/>
    </location>
</feature>
<name>RS8_LEPCP</name>
<protein>
    <recommendedName>
        <fullName evidence="1">Small ribosomal subunit protein uS8</fullName>
    </recommendedName>
    <alternativeName>
        <fullName evidence="2">30S ribosomal protein S8</fullName>
    </alternativeName>
</protein>
<organism>
    <name type="scientific">Leptothrix cholodnii (strain ATCC 51168 / LMG 8142 / SP-6)</name>
    <name type="common">Leptothrix discophora (strain SP-6)</name>
    <dbReference type="NCBI Taxonomy" id="395495"/>
    <lineage>
        <taxon>Bacteria</taxon>
        <taxon>Pseudomonadati</taxon>
        <taxon>Pseudomonadota</taxon>
        <taxon>Betaproteobacteria</taxon>
        <taxon>Burkholderiales</taxon>
        <taxon>Sphaerotilaceae</taxon>
        <taxon>Leptothrix</taxon>
    </lineage>
</organism>
<comment type="function">
    <text evidence="1">One of the primary rRNA binding proteins, it binds directly to 16S rRNA central domain where it helps coordinate assembly of the platform of the 30S subunit.</text>
</comment>
<comment type="subunit">
    <text evidence="1">Part of the 30S ribosomal subunit. Contacts proteins S5 and S12.</text>
</comment>
<comment type="similarity">
    <text evidence="1">Belongs to the universal ribosomal protein uS8 family.</text>
</comment>
<accession>B1Y8C3</accession>